<organism>
    <name type="scientific">Mus musculus</name>
    <name type="common">Mouse</name>
    <dbReference type="NCBI Taxonomy" id="10090"/>
    <lineage>
        <taxon>Eukaryota</taxon>
        <taxon>Metazoa</taxon>
        <taxon>Chordata</taxon>
        <taxon>Craniata</taxon>
        <taxon>Vertebrata</taxon>
        <taxon>Euteleostomi</taxon>
        <taxon>Mammalia</taxon>
        <taxon>Eutheria</taxon>
        <taxon>Euarchontoglires</taxon>
        <taxon>Glires</taxon>
        <taxon>Rodentia</taxon>
        <taxon>Myomorpha</taxon>
        <taxon>Muroidea</taxon>
        <taxon>Muridae</taxon>
        <taxon>Murinae</taxon>
        <taxon>Mus</taxon>
        <taxon>Mus</taxon>
    </lineage>
</organism>
<sequence length="627" mass="70404">MAWQGKLTDRTASIFQGKQMSLKLINIPRVKLSAAAFTKAFCHHKLIEVNATSVDSELLAPDIIHALQSSAWIQKNLQCLVLDSVSIPPNSGLVALSHFTGLHTLSVANVSFCNEDLVSVSQLPNLGSLDISNTLVTNISALLSCKNRLRSLTMHYLKCLAMNSPQVLAVIRQLKCLLHLDISDHQQLRSDLAFYLLQQKDILPNLTSLDISGGTDVTDQAVESFLQHRPAMRFVGLLYTDAGYSDFFTAKQGLKVAGGANMSQISEALSRYRNRSCFVKEALFRLFTETLSLRAVLPVMLKLVAIGMRNHPLDLPVQFTASACALNLTRQELARGMPVRLLAEITDLLFKATKNFPYYQQLQKNCLLSLTSSRILMDVPFDRFDAAKLALRWVCRRESPKLRTMAVSITSILALKLSPEEMGQLQEELIMAIKELLTIIRQKLAENLDDVTFLFTLKALWNLTDECPLACKYFMENEGLATVIRVLETFSISVIQSKVLGLLNNVAEVRELSSKLVTEDVIERIISLLHSSNLEVSFLAAGVLAHLTCDRQHWLSRDLQRTDLLRYLHLAIQNWPSSRCDMSVLVTYRSFKAFSPLLVNFSQPEVQRWALWAIHHVCSKNPRPKDV</sequence>
<gene>
    <name type="primary">Zyg11a</name>
</gene>
<protein>
    <recommendedName>
        <fullName>Protein zyg-11 homolog A</fullName>
    </recommendedName>
</protein>
<keyword id="KW-0433">Leucine-rich repeat</keyword>
<keyword id="KW-1185">Reference proteome</keyword>
<keyword id="KW-0677">Repeat</keyword>
<keyword id="KW-0833">Ubl conjugation pathway</keyword>
<dbReference type="EMBL" id="BX293563">
    <property type="status" value="NOT_ANNOTATED_CDS"/>
    <property type="molecule type" value="Genomic_DNA"/>
</dbReference>
<dbReference type="EMBL" id="BC022150">
    <property type="protein sequence ID" value="AAH22150.1"/>
    <property type="molecule type" value="mRNA"/>
</dbReference>
<dbReference type="FunCoup" id="A2BFL2">
    <property type="interactions" value="13"/>
</dbReference>
<dbReference type="STRING" id="10090.ENSMUSP00000038478"/>
<dbReference type="iPTMnet" id="A2BFL2"/>
<dbReference type="PhosphoSitePlus" id="A2BFL2"/>
<dbReference type="PaxDb" id="10090-ENSMUSP00000038478"/>
<dbReference type="PeptideAtlas" id="A2BFL2"/>
<dbReference type="ProteomicsDB" id="275320"/>
<dbReference type="AGR" id="MGI:2446208"/>
<dbReference type="MGI" id="MGI:2446208">
    <property type="gene designation" value="Zyg11a"/>
</dbReference>
<dbReference type="eggNOG" id="KOG3665">
    <property type="taxonomic scope" value="Eukaryota"/>
</dbReference>
<dbReference type="HOGENOM" id="CLU_011533_1_0_1"/>
<dbReference type="InParanoid" id="A2BFL2"/>
<dbReference type="PhylomeDB" id="A2BFL2"/>
<dbReference type="ChiTaRS" id="Zyg11a">
    <property type="organism name" value="mouse"/>
</dbReference>
<dbReference type="PRO" id="PR:A2BFL2"/>
<dbReference type="Proteomes" id="UP000000589">
    <property type="component" value="Unplaced"/>
</dbReference>
<dbReference type="RNAct" id="A2BFL2">
    <property type="molecule type" value="protein"/>
</dbReference>
<dbReference type="FunFam" id="3.80.10.10:FF:001025">
    <property type="entry name" value="Protein zyg-11 homolog A"/>
    <property type="match status" value="1"/>
</dbReference>
<dbReference type="Gene3D" id="1.25.10.10">
    <property type="entry name" value="Leucine-rich Repeat Variant"/>
    <property type="match status" value="1"/>
</dbReference>
<dbReference type="Gene3D" id="3.80.10.10">
    <property type="entry name" value="Ribonuclease Inhibitor"/>
    <property type="match status" value="1"/>
</dbReference>
<dbReference type="InterPro" id="IPR011989">
    <property type="entry name" value="ARM-like"/>
</dbReference>
<dbReference type="InterPro" id="IPR016024">
    <property type="entry name" value="ARM-type_fold"/>
</dbReference>
<dbReference type="InterPro" id="IPR000225">
    <property type="entry name" value="Armadillo"/>
</dbReference>
<dbReference type="InterPro" id="IPR032675">
    <property type="entry name" value="LRR_dom_sf"/>
</dbReference>
<dbReference type="InterPro" id="IPR055142">
    <property type="entry name" value="ZER1-like_C"/>
</dbReference>
<dbReference type="InterPro" id="IPR051341">
    <property type="entry name" value="Zyg-11_UBL_adapter"/>
</dbReference>
<dbReference type="PANTHER" id="PTHR12904">
    <property type="match status" value="1"/>
</dbReference>
<dbReference type="PANTHER" id="PTHR12904:SF20">
    <property type="entry name" value="PROTEIN ZYG-11 HOMOLOG A"/>
    <property type="match status" value="1"/>
</dbReference>
<dbReference type="Pfam" id="PF22964">
    <property type="entry name" value="ZER1-like_2nd"/>
    <property type="match status" value="1"/>
</dbReference>
<dbReference type="SUPFAM" id="SSF48371">
    <property type="entry name" value="ARM repeat"/>
    <property type="match status" value="1"/>
</dbReference>
<dbReference type="SUPFAM" id="SSF52047">
    <property type="entry name" value="RNI-like"/>
    <property type="match status" value="1"/>
</dbReference>
<dbReference type="PROSITE" id="PS50176">
    <property type="entry name" value="ARM_REPEAT"/>
    <property type="match status" value="1"/>
</dbReference>
<feature type="chain" id="PRO_0000305086" description="Protein zyg-11 homolog A">
    <location>
        <begin position="1"/>
        <end position="627"/>
    </location>
</feature>
<feature type="repeat" description="LRR 1">
    <location>
        <begin position="123"/>
        <end position="146"/>
    </location>
</feature>
<feature type="repeat" description="LRR 2">
    <location>
        <begin position="203"/>
        <end position="227"/>
    </location>
</feature>
<feature type="repeat" description="LRR 3">
    <location>
        <begin position="409"/>
        <end position="432"/>
    </location>
</feature>
<feature type="sequence conflict" description="In Ref. 2; AAH22150." evidence="2" ref="2">
    <original>A</original>
    <variation>T</variation>
    <location>
        <position position="481"/>
    </location>
</feature>
<accession>A2BFL2</accession>
<accession>Q8VC01</accession>
<name>ZY11A_MOUSE</name>
<reference key="1">
    <citation type="journal article" date="2009" name="PLoS Biol.">
        <title>Lineage-specific biology revealed by a finished genome assembly of the mouse.</title>
        <authorList>
            <person name="Church D.M."/>
            <person name="Goodstadt L."/>
            <person name="Hillier L.W."/>
            <person name="Zody M.C."/>
            <person name="Goldstein S."/>
            <person name="She X."/>
            <person name="Bult C.J."/>
            <person name="Agarwala R."/>
            <person name="Cherry J.L."/>
            <person name="DiCuccio M."/>
            <person name="Hlavina W."/>
            <person name="Kapustin Y."/>
            <person name="Meric P."/>
            <person name="Maglott D."/>
            <person name="Birtle Z."/>
            <person name="Marques A.C."/>
            <person name="Graves T."/>
            <person name="Zhou S."/>
            <person name="Teague B."/>
            <person name="Potamousis K."/>
            <person name="Churas C."/>
            <person name="Place M."/>
            <person name="Herschleb J."/>
            <person name="Runnheim R."/>
            <person name="Forrest D."/>
            <person name="Amos-Landgraf J."/>
            <person name="Schwartz D.C."/>
            <person name="Cheng Z."/>
            <person name="Lindblad-Toh K."/>
            <person name="Eichler E.E."/>
            <person name="Ponting C.P."/>
        </authorList>
    </citation>
    <scope>NUCLEOTIDE SEQUENCE [LARGE SCALE GENOMIC DNA]</scope>
    <source>
        <strain>C57BL/6J</strain>
    </source>
</reference>
<reference key="2">
    <citation type="journal article" date="2004" name="Genome Res.">
        <title>The status, quality, and expansion of the NIH full-length cDNA project: the Mammalian Gene Collection (MGC).</title>
        <authorList>
            <consortium name="The MGC Project Team"/>
        </authorList>
    </citation>
    <scope>NUCLEOTIDE SEQUENCE [LARGE SCALE MRNA] OF 73-627</scope>
    <source>
        <strain>FVB/N</strain>
        <tissue>Liver</tissue>
    </source>
</reference>
<proteinExistence type="evidence at transcript level"/>
<comment type="function">
    <text evidence="1">Probably acts as a target recruitment subunit in an E3 ubiquitin ligase complex ZYGA-CUL2-elongin BC.</text>
</comment>
<comment type="similarity">
    <text evidence="2">Belongs to the zyg-11 family.</text>
</comment>
<evidence type="ECO:0000250" key="1"/>
<evidence type="ECO:0000305" key="2"/>